<comment type="function">
    <text evidence="1">GTPase that plays an essential role in the late steps of ribosome biogenesis.</text>
</comment>
<comment type="subunit">
    <text evidence="1">Associates with the 50S ribosomal subunit.</text>
</comment>
<comment type="similarity">
    <text evidence="1">Belongs to the TRAFAC class TrmE-Era-EngA-EngB-Septin-like GTPase superfamily. EngA (Der) GTPase family.</text>
</comment>
<evidence type="ECO:0000255" key="1">
    <source>
        <dbReference type="HAMAP-Rule" id="MF_00195"/>
    </source>
</evidence>
<name>DER_SYMTH</name>
<organism>
    <name type="scientific">Symbiobacterium thermophilum (strain DSM 24528 / JCM 14929 / IAM 14863 / T)</name>
    <dbReference type="NCBI Taxonomy" id="292459"/>
    <lineage>
        <taxon>Bacteria</taxon>
        <taxon>Bacillati</taxon>
        <taxon>Bacillota</taxon>
        <taxon>Clostridia</taxon>
        <taxon>Eubacteriales</taxon>
        <taxon>Symbiobacteriaceae</taxon>
        <taxon>Symbiobacterium</taxon>
    </lineage>
</organism>
<reference key="1">
    <citation type="journal article" date="2004" name="Nucleic Acids Res.">
        <title>Genome sequence of Symbiobacterium thermophilum, an uncultivable bacterium that depends on microbial commensalism.</title>
        <authorList>
            <person name="Ueda K."/>
            <person name="Yamashita A."/>
            <person name="Ishikawa J."/>
            <person name="Shimada M."/>
            <person name="Watsuji T."/>
            <person name="Morimura K."/>
            <person name="Ikeda H."/>
            <person name="Hattori M."/>
            <person name="Beppu T."/>
        </authorList>
    </citation>
    <scope>NUCLEOTIDE SEQUENCE [LARGE SCALE GENOMIC DNA]</scope>
    <source>
        <strain>DSM 24528 / JCM 14929 / IAM 14863 / T</strain>
    </source>
</reference>
<feature type="chain" id="PRO_1000099170" description="GTPase Der">
    <location>
        <begin position="1"/>
        <end position="471"/>
    </location>
</feature>
<feature type="domain" description="EngA-type G 1">
    <location>
        <begin position="3"/>
        <end position="168"/>
    </location>
</feature>
<feature type="domain" description="EngA-type G 2">
    <location>
        <begin position="178"/>
        <end position="353"/>
    </location>
</feature>
<feature type="domain" description="KH-like" evidence="1">
    <location>
        <begin position="354"/>
        <end position="438"/>
    </location>
</feature>
<feature type="binding site" evidence="1">
    <location>
        <begin position="9"/>
        <end position="16"/>
    </location>
    <ligand>
        <name>GTP</name>
        <dbReference type="ChEBI" id="CHEBI:37565"/>
        <label>1</label>
    </ligand>
</feature>
<feature type="binding site" evidence="1">
    <location>
        <begin position="56"/>
        <end position="60"/>
    </location>
    <ligand>
        <name>GTP</name>
        <dbReference type="ChEBI" id="CHEBI:37565"/>
        <label>1</label>
    </ligand>
</feature>
<feature type="binding site" evidence="1">
    <location>
        <begin position="120"/>
        <end position="123"/>
    </location>
    <ligand>
        <name>GTP</name>
        <dbReference type="ChEBI" id="CHEBI:37565"/>
        <label>1</label>
    </ligand>
</feature>
<feature type="binding site" evidence="1">
    <location>
        <begin position="184"/>
        <end position="191"/>
    </location>
    <ligand>
        <name>GTP</name>
        <dbReference type="ChEBI" id="CHEBI:37565"/>
        <label>2</label>
    </ligand>
</feature>
<feature type="binding site" evidence="1">
    <location>
        <begin position="231"/>
        <end position="235"/>
    </location>
    <ligand>
        <name>GTP</name>
        <dbReference type="ChEBI" id="CHEBI:37565"/>
        <label>2</label>
    </ligand>
</feature>
<feature type="binding site" evidence="1">
    <location>
        <begin position="296"/>
        <end position="299"/>
    </location>
    <ligand>
        <name>GTP</name>
        <dbReference type="ChEBI" id="CHEBI:37565"/>
        <label>2</label>
    </ligand>
</feature>
<keyword id="KW-0342">GTP-binding</keyword>
<keyword id="KW-0547">Nucleotide-binding</keyword>
<keyword id="KW-1185">Reference proteome</keyword>
<keyword id="KW-0677">Repeat</keyword>
<keyword id="KW-0690">Ribosome biogenesis</keyword>
<dbReference type="EMBL" id="AP006840">
    <property type="protein sequence ID" value="BAD40664.1"/>
    <property type="molecule type" value="Genomic_DNA"/>
</dbReference>
<dbReference type="RefSeq" id="WP_011195807.1">
    <property type="nucleotide sequence ID" value="NC_006177.1"/>
</dbReference>
<dbReference type="SMR" id="Q67NS9"/>
<dbReference type="STRING" id="292459.STH1679"/>
<dbReference type="KEGG" id="sth:STH1679"/>
<dbReference type="eggNOG" id="COG1160">
    <property type="taxonomic scope" value="Bacteria"/>
</dbReference>
<dbReference type="HOGENOM" id="CLU_016077_6_2_9"/>
<dbReference type="OrthoDB" id="9805918at2"/>
<dbReference type="Proteomes" id="UP000000417">
    <property type="component" value="Chromosome"/>
</dbReference>
<dbReference type="GO" id="GO:0016887">
    <property type="term" value="F:ATP hydrolysis activity"/>
    <property type="evidence" value="ECO:0007669"/>
    <property type="project" value="InterPro"/>
</dbReference>
<dbReference type="GO" id="GO:0005525">
    <property type="term" value="F:GTP binding"/>
    <property type="evidence" value="ECO:0007669"/>
    <property type="project" value="UniProtKB-UniRule"/>
</dbReference>
<dbReference type="GO" id="GO:0043022">
    <property type="term" value="F:ribosome binding"/>
    <property type="evidence" value="ECO:0007669"/>
    <property type="project" value="TreeGrafter"/>
</dbReference>
<dbReference type="GO" id="GO:0042254">
    <property type="term" value="P:ribosome biogenesis"/>
    <property type="evidence" value="ECO:0007669"/>
    <property type="project" value="UniProtKB-KW"/>
</dbReference>
<dbReference type="CDD" id="cd01894">
    <property type="entry name" value="EngA1"/>
    <property type="match status" value="1"/>
</dbReference>
<dbReference type="CDD" id="cd01895">
    <property type="entry name" value="EngA2"/>
    <property type="match status" value="1"/>
</dbReference>
<dbReference type="FunFam" id="3.30.300.20:FF:000004">
    <property type="entry name" value="GTPase Der"/>
    <property type="match status" value="1"/>
</dbReference>
<dbReference type="FunFam" id="3.40.50.300:FF:000040">
    <property type="entry name" value="GTPase Der"/>
    <property type="match status" value="1"/>
</dbReference>
<dbReference type="FunFam" id="3.40.50.300:FF:000057">
    <property type="entry name" value="GTPase Der"/>
    <property type="match status" value="1"/>
</dbReference>
<dbReference type="Gene3D" id="3.30.300.20">
    <property type="match status" value="1"/>
</dbReference>
<dbReference type="Gene3D" id="3.40.50.300">
    <property type="entry name" value="P-loop containing nucleotide triphosphate hydrolases"/>
    <property type="match status" value="2"/>
</dbReference>
<dbReference type="HAMAP" id="MF_00195">
    <property type="entry name" value="GTPase_Der"/>
    <property type="match status" value="1"/>
</dbReference>
<dbReference type="InterPro" id="IPR003593">
    <property type="entry name" value="AAA+_ATPase"/>
</dbReference>
<dbReference type="InterPro" id="IPR031166">
    <property type="entry name" value="G_ENGA"/>
</dbReference>
<dbReference type="InterPro" id="IPR006073">
    <property type="entry name" value="GTP-bd"/>
</dbReference>
<dbReference type="InterPro" id="IPR016484">
    <property type="entry name" value="GTPase_Der"/>
</dbReference>
<dbReference type="InterPro" id="IPR032859">
    <property type="entry name" value="KH_dom-like"/>
</dbReference>
<dbReference type="InterPro" id="IPR015946">
    <property type="entry name" value="KH_dom-like_a/b"/>
</dbReference>
<dbReference type="InterPro" id="IPR027417">
    <property type="entry name" value="P-loop_NTPase"/>
</dbReference>
<dbReference type="InterPro" id="IPR005225">
    <property type="entry name" value="Small_GTP-bd"/>
</dbReference>
<dbReference type="NCBIfam" id="TIGR03594">
    <property type="entry name" value="GTPase_EngA"/>
    <property type="match status" value="1"/>
</dbReference>
<dbReference type="NCBIfam" id="TIGR00231">
    <property type="entry name" value="small_GTP"/>
    <property type="match status" value="2"/>
</dbReference>
<dbReference type="PANTHER" id="PTHR43834">
    <property type="entry name" value="GTPASE DER"/>
    <property type="match status" value="1"/>
</dbReference>
<dbReference type="PANTHER" id="PTHR43834:SF6">
    <property type="entry name" value="GTPASE DER"/>
    <property type="match status" value="1"/>
</dbReference>
<dbReference type="Pfam" id="PF14714">
    <property type="entry name" value="KH_dom-like"/>
    <property type="match status" value="1"/>
</dbReference>
<dbReference type="Pfam" id="PF01926">
    <property type="entry name" value="MMR_HSR1"/>
    <property type="match status" value="2"/>
</dbReference>
<dbReference type="PIRSF" id="PIRSF006485">
    <property type="entry name" value="GTP-binding_EngA"/>
    <property type="match status" value="1"/>
</dbReference>
<dbReference type="PRINTS" id="PR00326">
    <property type="entry name" value="GTP1OBG"/>
</dbReference>
<dbReference type="SMART" id="SM00382">
    <property type="entry name" value="AAA"/>
    <property type="match status" value="2"/>
</dbReference>
<dbReference type="SUPFAM" id="SSF52540">
    <property type="entry name" value="P-loop containing nucleoside triphosphate hydrolases"/>
    <property type="match status" value="2"/>
</dbReference>
<dbReference type="PROSITE" id="PS51712">
    <property type="entry name" value="G_ENGA"/>
    <property type="match status" value="2"/>
</dbReference>
<proteinExistence type="inferred from homology"/>
<sequence length="471" mass="52802">MKPIVAIVGRPNVGKSTLFNRLTQSRHAIVEDQPGVTRDRLYADTEWNGRTLTLVDTGGIQLDKEGDTIEAHVTRQAELAIREADVIIFVVDVTDGVTAPDLEVADLLRRQRKPVIVAVNKVENLKREDEALEFWALGLEPLINVSAEHGLGTGDLLDAVVAALPDLSEPEPEEGGPVRVAVIGRPNVGKSSLVNAILGEERVIVSDVPGTTRDAIDVLVERGEDKFLLIDTAGMRRKARVEEAVERYSVMRALRAVERAQVVLIVIDAQDGVTEQDQRIAGYAHENGKACIVVVNKWDLIEKDDRTMAKMTEEVRMRLAFMDYAMIHFVSAKTRARVHRLLPLIKEAAANHARRISTRELNDLVREAVALNPPPSDKGRRLKIFYATQPHVSPPGFVFFVNDSELVHFSYQRYLENQLRQTYAFEGTPINLYFRTREKAKLGERPVRVRRVLAGGQTREIRRAARKRSTE</sequence>
<protein>
    <recommendedName>
        <fullName evidence="1">GTPase Der</fullName>
    </recommendedName>
    <alternativeName>
        <fullName evidence="1">GTP-binding protein EngA</fullName>
    </alternativeName>
</protein>
<accession>Q67NS9</accession>
<gene>
    <name evidence="1" type="primary">der</name>
    <name type="synonym">engA</name>
    <name type="ordered locus">STH1679</name>
</gene>